<feature type="chain" id="PRO_0000148496" description="Dihydroorotate dehydrogenase (quinone)">
    <location>
        <begin position="1"/>
        <end position="350"/>
    </location>
</feature>
<feature type="region of interest" description="Disordered" evidence="2">
    <location>
        <begin position="245"/>
        <end position="265"/>
    </location>
</feature>
<feature type="active site" description="Nucleophile" evidence="1">
    <location>
        <position position="180"/>
    </location>
</feature>
<feature type="binding site" evidence="1">
    <location>
        <begin position="67"/>
        <end position="71"/>
    </location>
    <ligand>
        <name>FMN</name>
        <dbReference type="ChEBI" id="CHEBI:58210"/>
    </ligand>
</feature>
<feature type="binding site" evidence="1">
    <location>
        <position position="71"/>
    </location>
    <ligand>
        <name>substrate</name>
    </ligand>
</feature>
<feature type="binding site" evidence="1">
    <location>
        <position position="91"/>
    </location>
    <ligand>
        <name>FMN</name>
        <dbReference type="ChEBI" id="CHEBI:58210"/>
    </ligand>
</feature>
<feature type="binding site" evidence="1">
    <location>
        <begin position="116"/>
        <end position="120"/>
    </location>
    <ligand>
        <name>substrate</name>
    </ligand>
</feature>
<feature type="binding site" evidence="1">
    <location>
        <position position="144"/>
    </location>
    <ligand>
        <name>FMN</name>
        <dbReference type="ChEBI" id="CHEBI:58210"/>
    </ligand>
</feature>
<feature type="binding site" evidence="1">
    <location>
        <position position="177"/>
    </location>
    <ligand>
        <name>FMN</name>
        <dbReference type="ChEBI" id="CHEBI:58210"/>
    </ligand>
</feature>
<feature type="binding site" evidence="1">
    <location>
        <position position="177"/>
    </location>
    <ligand>
        <name>substrate</name>
    </ligand>
</feature>
<feature type="binding site" evidence="1">
    <location>
        <position position="182"/>
    </location>
    <ligand>
        <name>substrate</name>
    </ligand>
</feature>
<feature type="binding site" evidence="1">
    <location>
        <position position="213"/>
    </location>
    <ligand>
        <name>FMN</name>
        <dbReference type="ChEBI" id="CHEBI:58210"/>
    </ligand>
</feature>
<feature type="binding site" evidence="1">
    <location>
        <position position="241"/>
    </location>
    <ligand>
        <name>FMN</name>
        <dbReference type="ChEBI" id="CHEBI:58210"/>
    </ligand>
</feature>
<feature type="binding site" evidence="1">
    <location>
        <begin position="242"/>
        <end position="243"/>
    </location>
    <ligand>
        <name>substrate</name>
    </ligand>
</feature>
<feature type="binding site" evidence="1">
    <location>
        <position position="264"/>
    </location>
    <ligand>
        <name>FMN</name>
        <dbReference type="ChEBI" id="CHEBI:58210"/>
    </ligand>
</feature>
<feature type="binding site" evidence="1">
    <location>
        <position position="291"/>
    </location>
    <ligand>
        <name>FMN</name>
        <dbReference type="ChEBI" id="CHEBI:58210"/>
    </ligand>
</feature>
<feature type="binding site" evidence="1">
    <location>
        <begin position="312"/>
        <end position="313"/>
    </location>
    <ligand>
        <name>FMN</name>
        <dbReference type="ChEBI" id="CHEBI:58210"/>
    </ligand>
</feature>
<organism>
    <name type="scientific">Haloarcula marismortui (strain ATCC 43049 / DSM 3752 / JCM 8966 / VKM B-1809)</name>
    <name type="common">Halobacterium marismortui</name>
    <dbReference type="NCBI Taxonomy" id="272569"/>
    <lineage>
        <taxon>Archaea</taxon>
        <taxon>Methanobacteriati</taxon>
        <taxon>Methanobacteriota</taxon>
        <taxon>Stenosarchaea group</taxon>
        <taxon>Halobacteria</taxon>
        <taxon>Halobacteriales</taxon>
        <taxon>Haloarculaceae</taxon>
        <taxon>Haloarcula</taxon>
    </lineage>
</organism>
<keyword id="KW-1003">Cell membrane</keyword>
<keyword id="KW-0285">Flavoprotein</keyword>
<keyword id="KW-0288">FMN</keyword>
<keyword id="KW-0472">Membrane</keyword>
<keyword id="KW-0560">Oxidoreductase</keyword>
<keyword id="KW-0665">Pyrimidine biosynthesis</keyword>
<keyword id="KW-1185">Reference proteome</keyword>
<sequence length="350" mass="37214">MRPYDIAKPFLFSLPAETANKSVHRLLETVDGTRVADVMADRYTVADERLAVEAFGHTFDNPVGVAAGFDKNATIPETLASLGFGFAEVGGVTAEPQAGNARPRMFRLKADEAIINRMGLNNDGAIVIGERLKNVDAPFPVGVNIAKTEHVGTNEAPDDYRTTYEHVAEGGDFFVVNVSCPNSEGFEELQNRDAMEAILSELQDAGAAPLLVKLSPDLPEPAVEDALDLVTELDLDGVVATNTTTERPASLRSPNAVETGGLSGKPIENQATEMVRFVAERVDVPVVGVGGVSTAEGAYRKIRAGASLVQLYTGLVYRGPSIAREINSGLRDLLAEDGFDSVEDAVGADL</sequence>
<name>PYRD_HALMA</name>
<protein>
    <recommendedName>
        <fullName>Dihydroorotate dehydrogenase (quinone)</fullName>
        <ecNumber>1.3.5.2</ecNumber>
    </recommendedName>
    <alternativeName>
        <fullName>DHOdehase</fullName>
        <shortName>DHOD</shortName>
        <shortName>DHODase</shortName>
    </alternativeName>
    <alternativeName>
        <fullName>Dihydroorotate oxidase</fullName>
    </alternativeName>
</protein>
<evidence type="ECO:0000250" key="1"/>
<evidence type="ECO:0000256" key="2">
    <source>
        <dbReference type="SAM" id="MobiDB-lite"/>
    </source>
</evidence>
<evidence type="ECO:0000305" key="3"/>
<comment type="function">
    <text evidence="1">Catalyzes the conversion of dihydroorotate to orotate with quinone as electron acceptor.</text>
</comment>
<comment type="catalytic activity">
    <reaction>
        <text>(S)-dihydroorotate + a quinone = orotate + a quinol</text>
        <dbReference type="Rhea" id="RHEA:30187"/>
        <dbReference type="ChEBI" id="CHEBI:24646"/>
        <dbReference type="ChEBI" id="CHEBI:30839"/>
        <dbReference type="ChEBI" id="CHEBI:30864"/>
        <dbReference type="ChEBI" id="CHEBI:132124"/>
        <dbReference type="EC" id="1.3.5.2"/>
    </reaction>
</comment>
<comment type="cofactor">
    <cofactor evidence="1">
        <name>FMN</name>
        <dbReference type="ChEBI" id="CHEBI:58210"/>
    </cofactor>
    <text evidence="1">Binds 1 FMN per subunit.</text>
</comment>
<comment type="pathway">
    <text>Pyrimidine metabolism; UMP biosynthesis via de novo pathway; orotate from (S)-dihydroorotate (quinone route): step 1/1.</text>
</comment>
<comment type="subunit">
    <text evidence="1">Monomer.</text>
</comment>
<comment type="subcellular location">
    <subcellularLocation>
        <location evidence="1">Cell membrane</location>
        <topology evidence="1">Peripheral membrane protein</topology>
    </subcellularLocation>
</comment>
<comment type="similarity">
    <text evidence="3">Belongs to the dihydroorotate dehydrogenase family. Type 2 subfamily.</text>
</comment>
<reference key="1">
    <citation type="journal article" date="2004" name="Genome Res.">
        <title>Genome sequence of Haloarcula marismortui: a halophilic archaeon from the Dead Sea.</title>
        <authorList>
            <person name="Baliga N.S."/>
            <person name="Bonneau R."/>
            <person name="Facciotti M.T."/>
            <person name="Pan M."/>
            <person name="Glusman G."/>
            <person name="Deutsch E.W."/>
            <person name="Shannon P."/>
            <person name="Chiu Y."/>
            <person name="Weng R.S."/>
            <person name="Gan R.R."/>
            <person name="Hung P."/>
            <person name="Date S.V."/>
            <person name="Marcotte E."/>
            <person name="Hood L."/>
            <person name="Ng W.V."/>
        </authorList>
    </citation>
    <scope>NUCLEOTIDE SEQUENCE [LARGE SCALE GENOMIC DNA]</scope>
    <source>
        <strain>ATCC 43049 / DSM 3752 / JCM 8966 / VKM B-1809</strain>
    </source>
</reference>
<proteinExistence type="inferred from homology"/>
<dbReference type="EC" id="1.3.5.2"/>
<dbReference type="EMBL" id="AY596297">
    <property type="protein sequence ID" value="AAV47702.1"/>
    <property type="molecule type" value="Genomic_DNA"/>
</dbReference>
<dbReference type="RefSeq" id="WP_011224542.1">
    <property type="nucleotide sequence ID" value="NC_006396.1"/>
</dbReference>
<dbReference type="SMR" id="Q5UYF1"/>
<dbReference type="STRING" id="272569.rrnAC2969"/>
<dbReference type="PaxDb" id="272569-rrnAC2969"/>
<dbReference type="EnsemblBacteria" id="AAV47702">
    <property type="protein sequence ID" value="AAV47702"/>
    <property type="gene ID" value="rrnAC2969"/>
</dbReference>
<dbReference type="GeneID" id="40153797"/>
<dbReference type="KEGG" id="hma:rrnAC2969"/>
<dbReference type="PATRIC" id="fig|272569.17.peg.3529"/>
<dbReference type="eggNOG" id="arCOG00603">
    <property type="taxonomic scope" value="Archaea"/>
</dbReference>
<dbReference type="HOGENOM" id="CLU_013640_2_0_2"/>
<dbReference type="UniPathway" id="UPA00070">
    <property type="reaction ID" value="UER00946"/>
</dbReference>
<dbReference type="Proteomes" id="UP000001169">
    <property type="component" value="Chromosome I"/>
</dbReference>
<dbReference type="GO" id="GO:0005737">
    <property type="term" value="C:cytoplasm"/>
    <property type="evidence" value="ECO:0007669"/>
    <property type="project" value="InterPro"/>
</dbReference>
<dbReference type="GO" id="GO:0005886">
    <property type="term" value="C:plasma membrane"/>
    <property type="evidence" value="ECO:0007669"/>
    <property type="project" value="UniProtKB-SubCell"/>
</dbReference>
<dbReference type="GO" id="GO:0106430">
    <property type="term" value="F:dihydroorotate dehydrogenase (quinone) activity"/>
    <property type="evidence" value="ECO:0007669"/>
    <property type="project" value="UniProtKB-EC"/>
</dbReference>
<dbReference type="GO" id="GO:0006207">
    <property type="term" value="P:'de novo' pyrimidine nucleobase biosynthetic process"/>
    <property type="evidence" value="ECO:0007669"/>
    <property type="project" value="InterPro"/>
</dbReference>
<dbReference type="GO" id="GO:0044205">
    <property type="term" value="P:'de novo' UMP biosynthetic process"/>
    <property type="evidence" value="ECO:0007669"/>
    <property type="project" value="UniProtKB-UniRule"/>
</dbReference>
<dbReference type="CDD" id="cd04738">
    <property type="entry name" value="DHOD_2_like"/>
    <property type="match status" value="1"/>
</dbReference>
<dbReference type="Gene3D" id="3.20.20.70">
    <property type="entry name" value="Aldolase class I"/>
    <property type="match status" value="1"/>
</dbReference>
<dbReference type="HAMAP" id="MF_00225">
    <property type="entry name" value="DHO_dh_type2"/>
    <property type="match status" value="1"/>
</dbReference>
<dbReference type="InterPro" id="IPR013785">
    <property type="entry name" value="Aldolase_TIM"/>
</dbReference>
<dbReference type="InterPro" id="IPR050074">
    <property type="entry name" value="DHO_dehydrogenase"/>
</dbReference>
<dbReference type="InterPro" id="IPR012135">
    <property type="entry name" value="Dihydroorotate_DH_1_2"/>
</dbReference>
<dbReference type="InterPro" id="IPR005719">
    <property type="entry name" value="Dihydroorotate_DH_2"/>
</dbReference>
<dbReference type="InterPro" id="IPR005720">
    <property type="entry name" value="Dihydroorotate_DH_cat"/>
</dbReference>
<dbReference type="InterPro" id="IPR001295">
    <property type="entry name" value="Dihydroorotate_DH_CS"/>
</dbReference>
<dbReference type="NCBIfam" id="NF003652">
    <property type="entry name" value="PRK05286.2-5"/>
    <property type="match status" value="1"/>
</dbReference>
<dbReference type="NCBIfam" id="TIGR01036">
    <property type="entry name" value="pyrD_sub2"/>
    <property type="match status" value="1"/>
</dbReference>
<dbReference type="PANTHER" id="PTHR48109:SF4">
    <property type="entry name" value="DIHYDROOROTATE DEHYDROGENASE (QUINONE), MITOCHONDRIAL"/>
    <property type="match status" value="1"/>
</dbReference>
<dbReference type="PANTHER" id="PTHR48109">
    <property type="entry name" value="DIHYDROOROTATE DEHYDROGENASE (QUINONE), MITOCHONDRIAL-RELATED"/>
    <property type="match status" value="1"/>
</dbReference>
<dbReference type="Pfam" id="PF01180">
    <property type="entry name" value="DHO_dh"/>
    <property type="match status" value="1"/>
</dbReference>
<dbReference type="PIRSF" id="PIRSF000164">
    <property type="entry name" value="DHO_oxidase"/>
    <property type="match status" value="1"/>
</dbReference>
<dbReference type="SUPFAM" id="SSF51395">
    <property type="entry name" value="FMN-linked oxidoreductases"/>
    <property type="match status" value="1"/>
</dbReference>
<dbReference type="PROSITE" id="PS00911">
    <property type="entry name" value="DHODEHASE_1"/>
    <property type="match status" value="1"/>
</dbReference>
<dbReference type="PROSITE" id="PS00912">
    <property type="entry name" value="DHODEHASE_2"/>
    <property type="match status" value="1"/>
</dbReference>
<accession>Q5UYF1</accession>
<gene>
    <name type="primary">pyrD</name>
    <name type="ordered locus">rrnAC2969</name>
</gene>